<protein>
    <recommendedName>
        <fullName evidence="3">Tropinone reductase homolog At2g29260, chloroplastic</fullName>
        <ecNumber evidence="3">1.1.1.-</ecNumber>
    </recommendedName>
</protein>
<keyword id="KW-0150">Chloroplast</keyword>
<keyword id="KW-0521">NADP</keyword>
<keyword id="KW-0560">Oxidoreductase</keyword>
<keyword id="KW-0934">Plastid</keyword>
<keyword id="KW-1185">Reference proteome</keyword>
<keyword id="KW-0809">Transit peptide</keyword>
<name>TRNH5_ARATH</name>
<sequence length="322" mass="35238">MVLDMASHLYTNPPQNLHFISSSSSLKPHLCLSFKRINPKHKSSSSSVFVPYASQSSIAITSKERWSLNGMSALVTGGTRGIGRAIVEELAGLGAEVHTCARNEYELENCLSDWNRSGFRVAGSVCDVSDRSQREALMETVSSVFEGKLHILVNNVGTNIRKPMVEFTAGEFSTLMSTNFESVFHLCQLAYPLLRESKAGSVVFISSVSGFVSLKNMSVQSSTKGAINQLTRSLACEWAKDNIRINAVAPWYIKTSMVEQVLSNKEYLEEVYSVTPLGRLGEPREVSSAVAFLCLPASSYITGQILCVDGGMSINGFFPRHD</sequence>
<feature type="transit peptide" description="Chloroplast" evidence="2">
    <location>
        <begin position="1"/>
        <end position="61"/>
    </location>
</feature>
<feature type="chain" id="PRO_0000432360" description="Tropinone reductase homolog At2g29260, chloroplastic" evidence="2">
    <location>
        <begin position="62"/>
        <end position="322"/>
    </location>
</feature>
<feature type="binding site" evidence="1">
    <location>
        <begin position="74"/>
        <end position="98"/>
    </location>
    <ligand>
        <name>NADP(+)</name>
        <dbReference type="ChEBI" id="CHEBI:58349"/>
    </ligand>
</feature>
<feature type="binding site" evidence="1">
    <location>
        <position position="207"/>
    </location>
    <ligand>
        <name>substrate</name>
    </ligand>
</feature>
<feature type="sequence conflict" description="In Ref. 3; AAO42159." evidence="3" ref="3">
    <original>I</original>
    <variation>T</variation>
    <location>
        <position position="151"/>
    </location>
</feature>
<reference key="1">
    <citation type="journal article" date="1999" name="Nature">
        <title>Sequence and analysis of chromosome 2 of the plant Arabidopsis thaliana.</title>
        <authorList>
            <person name="Lin X."/>
            <person name="Kaul S."/>
            <person name="Rounsley S.D."/>
            <person name="Shea T.P."/>
            <person name="Benito M.-I."/>
            <person name="Town C.D."/>
            <person name="Fujii C.Y."/>
            <person name="Mason T.M."/>
            <person name="Bowman C.L."/>
            <person name="Barnstead M.E."/>
            <person name="Feldblyum T.V."/>
            <person name="Buell C.R."/>
            <person name="Ketchum K.A."/>
            <person name="Lee J.J."/>
            <person name="Ronning C.M."/>
            <person name="Koo H.L."/>
            <person name="Moffat K.S."/>
            <person name="Cronin L.A."/>
            <person name="Shen M."/>
            <person name="Pai G."/>
            <person name="Van Aken S."/>
            <person name="Umayam L."/>
            <person name="Tallon L.J."/>
            <person name="Gill J.E."/>
            <person name="Adams M.D."/>
            <person name="Carrera A.J."/>
            <person name="Creasy T.H."/>
            <person name="Goodman H.M."/>
            <person name="Somerville C.R."/>
            <person name="Copenhaver G.P."/>
            <person name="Preuss D."/>
            <person name="Nierman W.C."/>
            <person name="White O."/>
            <person name="Eisen J.A."/>
            <person name="Salzberg S.L."/>
            <person name="Fraser C.M."/>
            <person name="Venter J.C."/>
        </authorList>
    </citation>
    <scope>NUCLEOTIDE SEQUENCE [LARGE SCALE GENOMIC DNA]</scope>
    <source>
        <strain>cv. Columbia</strain>
    </source>
</reference>
<reference key="2">
    <citation type="journal article" date="2017" name="Plant J.">
        <title>Araport11: a complete reannotation of the Arabidopsis thaliana reference genome.</title>
        <authorList>
            <person name="Cheng C.Y."/>
            <person name="Krishnakumar V."/>
            <person name="Chan A.P."/>
            <person name="Thibaud-Nissen F."/>
            <person name="Schobel S."/>
            <person name="Town C.D."/>
        </authorList>
    </citation>
    <scope>GENOME REANNOTATION</scope>
    <source>
        <strain>cv. Columbia</strain>
    </source>
</reference>
<reference key="3">
    <citation type="journal article" date="2003" name="Science">
        <title>Empirical analysis of transcriptional activity in the Arabidopsis genome.</title>
        <authorList>
            <person name="Yamada K."/>
            <person name="Lim J."/>
            <person name="Dale J.M."/>
            <person name="Chen H."/>
            <person name="Shinn P."/>
            <person name="Palm C.J."/>
            <person name="Southwick A.M."/>
            <person name="Wu H.C."/>
            <person name="Kim C.J."/>
            <person name="Nguyen M."/>
            <person name="Pham P.K."/>
            <person name="Cheuk R.F."/>
            <person name="Karlin-Newmann G."/>
            <person name="Liu S.X."/>
            <person name="Lam B."/>
            <person name="Sakano H."/>
            <person name="Wu T."/>
            <person name="Yu G."/>
            <person name="Miranda M."/>
            <person name="Quach H.L."/>
            <person name="Tripp M."/>
            <person name="Chang C.H."/>
            <person name="Lee J.M."/>
            <person name="Toriumi M.J."/>
            <person name="Chan M.M."/>
            <person name="Tang C.C."/>
            <person name="Onodera C.S."/>
            <person name="Deng J.M."/>
            <person name="Akiyama K."/>
            <person name="Ansari Y."/>
            <person name="Arakawa T."/>
            <person name="Banh J."/>
            <person name="Banno F."/>
            <person name="Bowser L."/>
            <person name="Brooks S.Y."/>
            <person name="Carninci P."/>
            <person name="Chao Q."/>
            <person name="Choy N."/>
            <person name="Enju A."/>
            <person name="Goldsmith A.D."/>
            <person name="Gurjal M."/>
            <person name="Hansen N.F."/>
            <person name="Hayashizaki Y."/>
            <person name="Johnson-Hopson C."/>
            <person name="Hsuan V.W."/>
            <person name="Iida K."/>
            <person name="Karnes M."/>
            <person name="Khan S."/>
            <person name="Koesema E."/>
            <person name="Ishida J."/>
            <person name="Jiang P.X."/>
            <person name="Jones T."/>
            <person name="Kawai J."/>
            <person name="Kamiya A."/>
            <person name="Meyers C."/>
            <person name="Nakajima M."/>
            <person name="Narusaka M."/>
            <person name="Seki M."/>
            <person name="Sakurai T."/>
            <person name="Satou M."/>
            <person name="Tamse R."/>
            <person name="Vaysberg M."/>
            <person name="Wallender E.K."/>
            <person name="Wong C."/>
            <person name="Yamamura Y."/>
            <person name="Yuan S."/>
            <person name="Shinozaki K."/>
            <person name="Davis R.W."/>
            <person name="Theologis A."/>
            <person name="Ecker J.R."/>
        </authorList>
    </citation>
    <scope>NUCLEOTIDE SEQUENCE [LARGE SCALE MRNA] OF 11-322</scope>
    <source>
        <strain>cv. Columbia</strain>
    </source>
</reference>
<reference key="4">
    <citation type="journal article" date="2009" name="Chem. Biol. Interact.">
        <title>The SDR (short-chain dehydrogenase/reductase and related enzymes) nomenclature initiative.</title>
        <authorList>
            <person name="Persson B."/>
            <person name="Kallberg Y."/>
            <person name="Bray J.E."/>
            <person name="Bruford E."/>
            <person name="Dellaporta S.L."/>
            <person name="Favia A.D."/>
            <person name="Duarte R.G."/>
            <person name="Joernvall H."/>
            <person name="Kavanagh K.L."/>
            <person name="Kedishvili N."/>
            <person name="Kisiela M."/>
            <person name="Maser E."/>
            <person name="Mindnich R."/>
            <person name="Orchard S."/>
            <person name="Penning T.M."/>
            <person name="Thornton J.M."/>
            <person name="Adamski J."/>
            <person name="Oppermann U."/>
        </authorList>
    </citation>
    <scope>GENE FAMILY</scope>
    <scope>NOMENCLATURE</scope>
</reference>
<gene>
    <name evidence="4" type="ordered locus">At2g29260</name>
    <name evidence="5" type="ORF">F16P2.36</name>
</gene>
<evidence type="ECO:0000250" key="1">
    <source>
        <dbReference type="UniProtKB" id="P50162"/>
    </source>
</evidence>
<evidence type="ECO:0000255" key="2"/>
<evidence type="ECO:0000305" key="3"/>
<evidence type="ECO:0000312" key="4">
    <source>
        <dbReference type="Araport" id="AT2G29260"/>
    </source>
</evidence>
<evidence type="ECO:0000312" key="5">
    <source>
        <dbReference type="EMBL" id="AAC95209.1"/>
    </source>
</evidence>
<evidence type="ECO:0000312" key="6">
    <source>
        <dbReference type="Proteomes" id="UP000006548"/>
    </source>
</evidence>
<comment type="subcellular location">
    <subcellularLocation>
        <location evidence="2">Plastid</location>
        <location evidence="2">Chloroplast</location>
    </subcellularLocation>
</comment>
<comment type="similarity">
    <text evidence="3">Belongs to the short-chain dehydrogenases/reductases (SDR) family. SDR65C subfamily.</text>
</comment>
<accession>Q9ZW12</accession>
<accession>Q84W78</accession>
<dbReference type="EC" id="1.1.1.-" evidence="3"/>
<dbReference type="EMBL" id="AC004561">
    <property type="protein sequence ID" value="AAC95209.1"/>
    <property type="molecule type" value="Genomic_DNA"/>
</dbReference>
<dbReference type="EMBL" id="CP002685">
    <property type="protein sequence ID" value="AEC08226.1"/>
    <property type="molecule type" value="Genomic_DNA"/>
</dbReference>
<dbReference type="EMBL" id="BT004138">
    <property type="protein sequence ID" value="AAO42159.1"/>
    <property type="molecule type" value="mRNA"/>
</dbReference>
<dbReference type="PIR" id="D84694">
    <property type="entry name" value="D84694"/>
</dbReference>
<dbReference type="RefSeq" id="NP_180489.1">
    <property type="nucleotide sequence ID" value="NM_128482.4"/>
</dbReference>
<dbReference type="SMR" id="Q9ZW12"/>
<dbReference type="FunCoup" id="Q9ZW12">
    <property type="interactions" value="49"/>
</dbReference>
<dbReference type="STRING" id="3702.Q9ZW12"/>
<dbReference type="PaxDb" id="3702-AT2G29260.1"/>
<dbReference type="ProteomicsDB" id="232407"/>
<dbReference type="EnsemblPlants" id="AT2G29260.1">
    <property type="protein sequence ID" value="AT2G29260.1"/>
    <property type="gene ID" value="AT2G29260"/>
</dbReference>
<dbReference type="GeneID" id="817475"/>
<dbReference type="Gramene" id="AT2G29260.1">
    <property type="protein sequence ID" value="AT2G29260.1"/>
    <property type="gene ID" value="AT2G29260"/>
</dbReference>
<dbReference type="KEGG" id="ath:AT2G29260"/>
<dbReference type="Araport" id="AT2G29260"/>
<dbReference type="TAIR" id="AT2G29260"/>
<dbReference type="eggNOG" id="KOG0725">
    <property type="taxonomic scope" value="Eukaryota"/>
</dbReference>
<dbReference type="HOGENOM" id="CLU_010194_1_1_1"/>
<dbReference type="InParanoid" id="Q9ZW12"/>
<dbReference type="OMA" id="GMTYTPM"/>
<dbReference type="OrthoDB" id="417891at2759"/>
<dbReference type="PhylomeDB" id="Q9ZW12"/>
<dbReference type="BioCyc" id="ARA:AT2G29260-MONOMER"/>
<dbReference type="PRO" id="PR:Q9ZW12"/>
<dbReference type="Proteomes" id="UP000006548">
    <property type="component" value="Chromosome 2"/>
</dbReference>
<dbReference type="ExpressionAtlas" id="Q9ZW12">
    <property type="expression patterns" value="baseline and differential"/>
</dbReference>
<dbReference type="GO" id="GO:0009507">
    <property type="term" value="C:chloroplast"/>
    <property type="evidence" value="ECO:0007669"/>
    <property type="project" value="UniProtKB-SubCell"/>
</dbReference>
<dbReference type="GO" id="GO:0016491">
    <property type="term" value="F:oxidoreductase activity"/>
    <property type="evidence" value="ECO:0007669"/>
    <property type="project" value="UniProtKB-KW"/>
</dbReference>
<dbReference type="FunFam" id="3.40.50.720:FF:000084">
    <property type="entry name" value="Short-chain dehydrogenase reductase"/>
    <property type="match status" value="1"/>
</dbReference>
<dbReference type="Gene3D" id="3.40.50.720">
    <property type="entry name" value="NAD(P)-binding Rossmann-like Domain"/>
    <property type="match status" value="1"/>
</dbReference>
<dbReference type="InterPro" id="IPR036291">
    <property type="entry name" value="NAD(P)-bd_dom_sf"/>
</dbReference>
<dbReference type="InterPro" id="IPR002347">
    <property type="entry name" value="SDR_fam"/>
</dbReference>
<dbReference type="InterPro" id="IPR045000">
    <property type="entry name" value="TR"/>
</dbReference>
<dbReference type="PANTHER" id="PTHR42898:SF2">
    <property type="entry name" value="ENOYL-(ACYL CARRIER) REDUCTASE"/>
    <property type="match status" value="1"/>
</dbReference>
<dbReference type="PANTHER" id="PTHR42898">
    <property type="entry name" value="TROPINONE REDUCTASE"/>
    <property type="match status" value="1"/>
</dbReference>
<dbReference type="Pfam" id="PF13561">
    <property type="entry name" value="adh_short_C2"/>
    <property type="match status" value="1"/>
</dbReference>
<dbReference type="PRINTS" id="PR00081">
    <property type="entry name" value="GDHRDH"/>
</dbReference>
<dbReference type="PRINTS" id="PR00080">
    <property type="entry name" value="SDRFAMILY"/>
</dbReference>
<dbReference type="SUPFAM" id="SSF51735">
    <property type="entry name" value="NAD(P)-binding Rossmann-fold domains"/>
    <property type="match status" value="1"/>
</dbReference>
<proteinExistence type="evidence at transcript level"/>
<organism evidence="6">
    <name type="scientific">Arabidopsis thaliana</name>
    <name type="common">Mouse-ear cress</name>
    <dbReference type="NCBI Taxonomy" id="3702"/>
    <lineage>
        <taxon>Eukaryota</taxon>
        <taxon>Viridiplantae</taxon>
        <taxon>Streptophyta</taxon>
        <taxon>Embryophyta</taxon>
        <taxon>Tracheophyta</taxon>
        <taxon>Spermatophyta</taxon>
        <taxon>Magnoliopsida</taxon>
        <taxon>eudicotyledons</taxon>
        <taxon>Gunneridae</taxon>
        <taxon>Pentapetalae</taxon>
        <taxon>rosids</taxon>
        <taxon>malvids</taxon>
        <taxon>Brassicales</taxon>
        <taxon>Brassicaceae</taxon>
        <taxon>Camelineae</taxon>
        <taxon>Arabidopsis</taxon>
    </lineage>
</organism>